<feature type="chain" id="PRO_0000157449" description="UPF0324 membrane protein SO_4708">
    <location>
        <begin position="1"/>
        <end position="316"/>
    </location>
</feature>
<feature type="transmembrane region" description="Helical" evidence="1">
    <location>
        <begin position="61"/>
        <end position="80"/>
    </location>
</feature>
<feature type="transmembrane region" description="Helical" evidence="1">
    <location>
        <begin position="85"/>
        <end position="107"/>
    </location>
</feature>
<feature type="transmembrane region" description="Helical" evidence="1">
    <location>
        <begin position="114"/>
        <end position="136"/>
    </location>
</feature>
<feature type="transmembrane region" description="Helical" evidence="1">
    <location>
        <begin position="146"/>
        <end position="168"/>
    </location>
</feature>
<feature type="transmembrane region" description="Helical" evidence="1">
    <location>
        <begin position="175"/>
        <end position="197"/>
    </location>
</feature>
<feature type="transmembrane region" description="Helical" evidence="1">
    <location>
        <begin position="207"/>
        <end position="226"/>
    </location>
</feature>
<feature type="transmembrane region" description="Helical" evidence="1">
    <location>
        <begin position="233"/>
        <end position="252"/>
    </location>
</feature>
<feature type="transmembrane region" description="Helical" evidence="1">
    <location>
        <begin position="262"/>
        <end position="281"/>
    </location>
</feature>
<feature type="transmembrane region" description="Helical" evidence="1">
    <location>
        <begin position="293"/>
        <end position="315"/>
    </location>
</feature>
<organism>
    <name type="scientific">Shewanella oneidensis (strain ATCC 700550 / JCM 31522 / CIP 106686 / LMG 19005 / NCIMB 14063 / MR-1)</name>
    <dbReference type="NCBI Taxonomy" id="211586"/>
    <lineage>
        <taxon>Bacteria</taxon>
        <taxon>Pseudomonadati</taxon>
        <taxon>Pseudomonadota</taxon>
        <taxon>Gammaproteobacteria</taxon>
        <taxon>Alteromonadales</taxon>
        <taxon>Shewanellaceae</taxon>
        <taxon>Shewanella</taxon>
    </lineage>
</organism>
<evidence type="ECO:0000255" key="1"/>
<evidence type="ECO:0000305" key="2"/>
<comment type="subcellular location">
    <subcellularLocation>
        <location evidence="2">Cell membrane</location>
        <topology evidence="2">Multi-pass membrane protein</topology>
    </subcellularLocation>
</comment>
<comment type="similarity">
    <text evidence="2">Belongs to the UPF0324 family.</text>
</comment>
<name>Y4708_SHEON</name>
<gene>
    <name type="ordered locus">SO_4708</name>
</gene>
<protein>
    <recommendedName>
        <fullName>UPF0324 membrane protein SO_4708</fullName>
    </recommendedName>
</protein>
<dbReference type="EMBL" id="AE014299">
    <property type="protein sequence ID" value="AAN57667.1"/>
    <property type="molecule type" value="Genomic_DNA"/>
</dbReference>
<dbReference type="RefSeq" id="NP_720224.1">
    <property type="nucleotide sequence ID" value="NC_004347.2"/>
</dbReference>
<dbReference type="RefSeq" id="WP_011074294.1">
    <property type="nucleotide sequence ID" value="NC_004347.2"/>
</dbReference>
<dbReference type="PaxDb" id="211586-SO_4708"/>
<dbReference type="KEGG" id="son:SO_4708"/>
<dbReference type="PATRIC" id="fig|211586.12.peg.4565"/>
<dbReference type="eggNOG" id="COG2855">
    <property type="taxonomic scope" value="Bacteria"/>
</dbReference>
<dbReference type="HOGENOM" id="CLU_033541_2_0_6"/>
<dbReference type="OrthoDB" id="5393513at2"/>
<dbReference type="PhylomeDB" id="Q8E8F7"/>
<dbReference type="BioCyc" id="SONE211586:G1GMP-4351-MONOMER"/>
<dbReference type="Proteomes" id="UP000008186">
    <property type="component" value="Chromosome"/>
</dbReference>
<dbReference type="GO" id="GO:0005886">
    <property type="term" value="C:plasma membrane"/>
    <property type="evidence" value="ECO:0000318"/>
    <property type="project" value="GO_Central"/>
</dbReference>
<dbReference type="InterPro" id="IPR018383">
    <property type="entry name" value="UPF0324_pro"/>
</dbReference>
<dbReference type="PANTHER" id="PTHR30106">
    <property type="entry name" value="INNER MEMBRANE PROTEIN YEIH-RELATED"/>
    <property type="match status" value="1"/>
</dbReference>
<dbReference type="PANTHER" id="PTHR30106:SF1">
    <property type="entry name" value="UPF0324 MEMBRANE PROTEIN FN0533"/>
    <property type="match status" value="1"/>
</dbReference>
<dbReference type="Pfam" id="PF03601">
    <property type="entry name" value="Cons_hypoth698"/>
    <property type="match status" value="1"/>
</dbReference>
<reference key="1">
    <citation type="journal article" date="2002" name="Nat. Biotechnol.">
        <title>Genome sequence of the dissimilatory metal ion-reducing bacterium Shewanella oneidensis.</title>
        <authorList>
            <person name="Heidelberg J.F."/>
            <person name="Paulsen I.T."/>
            <person name="Nelson K.E."/>
            <person name="Gaidos E.J."/>
            <person name="Nelson W.C."/>
            <person name="Read T.D."/>
            <person name="Eisen J.A."/>
            <person name="Seshadri R."/>
            <person name="Ward N.L."/>
            <person name="Methe B.A."/>
            <person name="Clayton R.A."/>
            <person name="Meyer T."/>
            <person name="Tsapin A."/>
            <person name="Scott J."/>
            <person name="Beanan M.J."/>
            <person name="Brinkac L.M."/>
            <person name="Daugherty S.C."/>
            <person name="DeBoy R.T."/>
            <person name="Dodson R.J."/>
            <person name="Durkin A.S."/>
            <person name="Haft D.H."/>
            <person name="Kolonay J.F."/>
            <person name="Madupu R."/>
            <person name="Peterson J.D."/>
            <person name="Umayam L.A."/>
            <person name="White O."/>
            <person name="Wolf A.M."/>
            <person name="Vamathevan J.J."/>
            <person name="Weidman J.F."/>
            <person name="Impraim M."/>
            <person name="Lee K."/>
            <person name="Berry K.J."/>
            <person name="Lee C."/>
            <person name="Mueller J."/>
            <person name="Khouri H.M."/>
            <person name="Gill J."/>
            <person name="Utterback T.R."/>
            <person name="McDonald L.A."/>
            <person name="Feldblyum T.V."/>
            <person name="Smith H.O."/>
            <person name="Venter J.C."/>
            <person name="Nealson K.H."/>
            <person name="Fraser C.M."/>
        </authorList>
    </citation>
    <scope>NUCLEOTIDE SEQUENCE [LARGE SCALE GENOMIC DNA]</scope>
    <source>
        <strain>ATCC 700550 / JCM 31522 / CIP 106686 / LMG 19005 / NCIMB 14063 / MR-1</strain>
    </source>
</reference>
<accession>Q8E8F7</accession>
<keyword id="KW-1003">Cell membrane</keyword>
<keyword id="KW-0472">Membrane</keyword>
<keyword id="KW-1185">Reference proteome</keyword>
<keyword id="KW-0812">Transmembrane</keyword>
<keyword id="KW-1133">Transmembrane helix</keyword>
<proteinExistence type="inferred from homology"/>
<sequence length="316" mass="33722">MNFSSIFSQLKDPHRLIFICAALLCLTPFMSSPMALVLGFTLASLGWVPKDWNIAALTKKLLSYSIIGLGFGINLTAAIEASSHNLGLIIGSIIFTLILGFIVTRALKFDPITGHLIASGTAICGGSAIAAVAPAVNAKADQTATALACVFVLNSVALFLFPALGHLLNMSQYDFGVWSAIAIHDTSSVVGAASAYGDEALKTATTIKLARALWIIPIALVSALIFGGDKRKLNLPYFIGFYCLAIAIAHWLPQFQPLYNTLFMVSKHTLVLCLFLIGAGITVQKMRASGPKPLLLGVILWMAIGVTSLAYILYFQ</sequence>